<dbReference type="EC" id="2.1.2.1" evidence="1"/>
<dbReference type="EMBL" id="AE004091">
    <property type="protein sequence ID" value="AAG08800.1"/>
    <property type="molecule type" value="Genomic_DNA"/>
</dbReference>
<dbReference type="PIR" id="G82968">
    <property type="entry name" value="G82968"/>
</dbReference>
<dbReference type="RefSeq" id="NP_254102.1">
    <property type="nucleotide sequence ID" value="NC_002516.2"/>
</dbReference>
<dbReference type="RefSeq" id="WP_003148380.1">
    <property type="nucleotide sequence ID" value="NZ_JASSSF010000002.1"/>
</dbReference>
<dbReference type="SMR" id="Q9HTE9"/>
<dbReference type="FunCoup" id="Q9HTE9">
    <property type="interactions" value="740"/>
</dbReference>
<dbReference type="STRING" id="208964.PA5415"/>
<dbReference type="PaxDb" id="208964-PA5415"/>
<dbReference type="GeneID" id="880066"/>
<dbReference type="KEGG" id="pae:PA5415"/>
<dbReference type="PATRIC" id="fig|208964.12.peg.5675"/>
<dbReference type="PseudoCAP" id="PA5415"/>
<dbReference type="HOGENOM" id="CLU_022477_2_1_6"/>
<dbReference type="InParanoid" id="Q9HTE9"/>
<dbReference type="OrthoDB" id="9803846at2"/>
<dbReference type="PhylomeDB" id="Q9HTE9"/>
<dbReference type="BioCyc" id="PAER208964:G1FZ6-5542-MONOMER"/>
<dbReference type="UniPathway" id="UPA00193"/>
<dbReference type="UniPathway" id="UPA00288">
    <property type="reaction ID" value="UER01023"/>
</dbReference>
<dbReference type="Proteomes" id="UP000002438">
    <property type="component" value="Chromosome"/>
</dbReference>
<dbReference type="GO" id="GO:0005737">
    <property type="term" value="C:cytoplasm"/>
    <property type="evidence" value="ECO:0000318"/>
    <property type="project" value="GO_Central"/>
</dbReference>
<dbReference type="GO" id="GO:0005829">
    <property type="term" value="C:cytosol"/>
    <property type="evidence" value="ECO:0000318"/>
    <property type="project" value="GO_Central"/>
</dbReference>
<dbReference type="GO" id="GO:0004372">
    <property type="term" value="F:glycine hydroxymethyltransferase activity"/>
    <property type="evidence" value="ECO:0000318"/>
    <property type="project" value="GO_Central"/>
</dbReference>
<dbReference type="GO" id="GO:0030170">
    <property type="term" value="F:pyridoxal phosphate binding"/>
    <property type="evidence" value="ECO:0000318"/>
    <property type="project" value="GO_Central"/>
</dbReference>
<dbReference type="GO" id="GO:0019264">
    <property type="term" value="P:glycine biosynthetic process from serine"/>
    <property type="evidence" value="ECO:0000318"/>
    <property type="project" value="GO_Central"/>
</dbReference>
<dbReference type="GO" id="GO:0035999">
    <property type="term" value="P:tetrahydrofolate interconversion"/>
    <property type="evidence" value="ECO:0007669"/>
    <property type="project" value="UniProtKB-UniRule"/>
</dbReference>
<dbReference type="GO" id="GO:0046653">
    <property type="term" value="P:tetrahydrofolate metabolic process"/>
    <property type="evidence" value="ECO:0000318"/>
    <property type="project" value="GO_Central"/>
</dbReference>
<dbReference type="CDD" id="cd00378">
    <property type="entry name" value="SHMT"/>
    <property type="match status" value="1"/>
</dbReference>
<dbReference type="FunFam" id="3.40.640.10:FF:000001">
    <property type="entry name" value="Serine hydroxymethyltransferase"/>
    <property type="match status" value="1"/>
</dbReference>
<dbReference type="FunFam" id="3.90.1150.10:FF:000003">
    <property type="entry name" value="Serine hydroxymethyltransferase"/>
    <property type="match status" value="1"/>
</dbReference>
<dbReference type="Gene3D" id="3.90.1150.10">
    <property type="entry name" value="Aspartate Aminotransferase, domain 1"/>
    <property type="match status" value="1"/>
</dbReference>
<dbReference type="Gene3D" id="3.40.640.10">
    <property type="entry name" value="Type I PLP-dependent aspartate aminotransferase-like (Major domain)"/>
    <property type="match status" value="1"/>
</dbReference>
<dbReference type="HAMAP" id="MF_00051">
    <property type="entry name" value="SHMT"/>
    <property type="match status" value="1"/>
</dbReference>
<dbReference type="InterPro" id="IPR015424">
    <property type="entry name" value="PyrdxlP-dep_Trfase"/>
</dbReference>
<dbReference type="InterPro" id="IPR015421">
    <property type="entry name" value="PyrdxlP-dep_Trfase_major"/>
</dbReference>
<dbReference type="InterPro" id="IPR015422">
    <property type="entry name" value="PyrdxlP-dep_Trfase_small"/>
</dbReference>
<dbReference type="InterPro" id="IPR001085">
    <property type="entry name" value="Ser_HO-MeTrfase"/>
</dbReference>
<dbReference type="InterPro" id="IPR049943">
    <property type="entry name" value="Ser_HO-MeTrfase-like"/>
</dbReference>
<dbReference type="InterPro" id="IPR019798">
    <property type="entry name" value="Ser_HO-MeTrfase_PLP_BS"/>
</dbReference>
<dbReference type="InterPro" id="IPR039429">
    <property type="entry name" value="SHMT-like_dom"/>
</dbReference>
<dbReference type="NCBIfam" id="NF000586">
    <property type="entry name" value="PRK00011.1"/>
    <property type="match status" value="1"/>
</dbReference>
<dbReference type="PANTHER" id="PTHR11680">
    <property type="entry name" value="SERINE HYDROXYMETHYLTRANSFERASE"/>
    <property type="match status" value="1"/>
</dbReference>
<dbReference type="PANTHER" id="PTHR11680:SF50">
    <property type="entry name" value="SERINE HYDROXYMETHYLTRANSFERASE"/>
    <property type="match status" value="1"/>
</dbReference>
<dbReference type="Pfam" id="PF00464">
    <property type="entry name" value="SHMT"/>
    <property type="match status" value="1"/>
</dbReference>
<dbReference type="PIRSF" id="PIRSF000412">
    <property type="entry name" value="SHMT"/>
    <property type="match status" value="1"/>
</dbReference>
<dbReference type="SUPFAM" id="SSF53383">
    <property type="entry name" value="PLP-dependent transferases"/>
    <property type="match status" value="1"/>
</dbReference>
<dbReference type="PROSITE" id="PS00096">
    <property type="entry name" value="SHMT"/>
    <property type="match status" value="1"/>
</dbReference>
<feature type="chain" id="PRO_0000113637" description="Serine hydroxymethyltransferase 1">
    <location>
        <begin position="1"/>
        <end position="417"/>
    </location>
</feature>
<feature type="binding site" evidence="1">
    <location>
        <position position="121"/>
    </location>
    <ligand>
        <name>(6S)-5,6,7,8-tetrahydrofolate</name>
        <dbReference type="ChEBI" id="CHEBI:57453"/>
    </ligand>
</feature>
<feature type="binding site" evidence="1">
    <location>
        <begin position="125"/>
        <end position="127"/>
    </location>
    <ligand>
        <name>(6S)-5,6,7,8-tetrahydrofolate</name>
        <dbReference type="ChEBI" id="CHEBI:57453"/>
    </ligand>
</feature>
<feature type="binding site" evidence="1">
    <location>
        <begin position="355"/>
        <end position="357"/>
    </location>
    <ligand>
        <name>(6S)-5,6,7,8-tetrahydrofolate</name>
        <dbReference type="ChEBI" id="CHEBI:57453"/>
    </ligand>
</feature>
<feature type="site" description="Plays an important role in substrate specificity" evidence="1">
    <location>
        <position position="229"/>
    </location>
</feature>
<feature type="modified residue" description="N6-(pyridoxal phosphate)lysine" evidence="1">
    <location>
        <position position="230"/>
    </location>
</feature>
<reference key="1">
    <citation type="journal article" date="2000" name="Nature">
        <title>Complete genome sequence of Pseudomonas aeruginosa PAO1, an opportunistic pathogen.</title>
        <authorList>
            <person name="Stover C.K."/>
            <person name="Pham X.-Q.T."/>
            <person name="Erwin A.L."/>
            <person name="Mizoguchi S.D."/>
            <person name="Warrener P."/>
            <person name="Hickey M.J."/>
            <person name="Brinkman F.S.L."/>
            <person name="Hufnagle W.O."/>
            <person name="Kowalik D.J."/>
            <person name="Lagrou M."/>
            <person name="Garber R.L."/>
            <person name="Goltry L."/>
            <person name="Tolentino E."/>
            <person name="Westbrock-Wadman S."/>
            <person name="Yuan Y."/>
            <person name="Brody L.L."/>
            <person name="Coulter S.N."/>
            <person name="Folger K.R."/>
            <person name="Kas A."/>
            <person name="Larbig K."/>
            <person name="Lim R.M."/>
            <person name="Smith K.A."/>
            <person name="Spencer D.H."/>
            <person name="Wong G.K.-S."/>
            <person name="Wu Z."/>
            <person name="Paulsen I.T."/>
            <person name="Reizer J."/>
            <person name="Saier M.H. Jr."/>
            <person name="Hancock R.E.W."/>
            <person name="Lory S."/>
            <person name="Olson M.V."/>
        </authorList>
    </citation>
    <scope>NUCLEOTIDE SEQUENCE [LARGE SCALE GENOMIC DNA]</scope>
    <source>
        <strain>ATCC 15692 / DSM 22644 / CIP 104116 / JCM 14847 / LMG 12228 / 1C / PRS 101 / PAO1</strain>
    </source>
</reference>
<proteinExistence type="inferred from homology"/>
<organism>
    <name type="scientific">Pseudomonas aeruginosa (strain ATCC 15692 / DSM 22644 / CIP 104116 / JCM 14847 / LMG 12228 / 1C / PRS 101 / PAO1)</name>
    <dbReference type="NCBI Taxonomy" id="208964"/>
    <lineage>
        <taxon>Bacteria</taxon>
        <taxon>Pseudomonadati</taxon>
        <taxon>Pseudomonadota</taxon>
        <taxon>Gammaproteobacteria</taxon>
        <taxon>Pseudomonadales</taxon>
        <taxon>Pseudomonadaceae</taxon>
        <taxon>Pseudomonas</taxon>
    </lineage>
</organism>
<evidence type="ECO:0000255" key="1">
    <source>
        <dbReference type="HAMAP-Rule" id="MF_00051"/>
    </source>
</evidence>
<gene>
    <name evidence="1" type="primary">glyA1</name>
    <name type="ordered locus">PA5415</name>
</gene>
<keyword id="KW-0028">Amino-acid biosynthesis</keyword>
<keyword id="KW-0963">Cytoplasm</keyword>
<keyword id="KW-0554">One-carbon metabolism</keyword>
<keyword id="KW-0663">Pyridoxal phosphate</keyword>
<keyword id="KW-1185">Reference proteome</keyword>
<keyword id="KW-0808">Transferase</keyword>
<sequence>MFSKHDQIRGYDDELLAAMDAEEARQEDHLELIASENYTSKRVMQAQGSGLTNKYAEGYPGKRYYGGCEHVDKVERLAIDRARQLFGADYANVQPHSGSSANAAVYLALLNAGDTILGMSLAHGGHLTHGAKVSSSGKLYNAVQYGLDTATGLIDYDEVERLAVEHKPKMIVAGFSAYSKTLDFPRFRAIADKVGALLFVDMAHVAGLVAAGLYPNPIPFADVVTTTTHKTLRGPRGGLILARANEEIEKKLNSAVFPGAQGGPLMHVIAAKAVCFKEALEPGFKDYQAQVIRNAKAMAEVFIGRGYDVVSGGTDNHLMLISLVRQGLTGKEADAALGRVGITVNKNAVPNDPQSPFVTSGIRIGTPAITTRGLQEAQSRELAGWICDILDHLGDADVEAKVATQVAGLCADFPVYR</sequence>
<comment type="function">
    <text evidence="1">Catalyzes the reversible interconversion of serine and glycine with tetrahydrofolate (THF) serving as the one-carbon carrier. This reaction serves as the major source of one-carbon groups required for the biosynthesis of purines, thymidylate, methionine, and other important biomolecules. Also exhibits THF-independent aldolase activity toward beta-hydroxyamino acids, producing glycine and aldehydes, via a retro-aldol mechanism.</text>
</comment>
<comment type="catalytic activity">
    <reaction evidence="1">
        <text>(6R)-5,10-methylene-5,6,7,8-tetrahydrofolate + glycine + H2O = (6S)-5,6,7,8-tetrahydrofolate + L-serine</text>
        <dbReference type="Rhea" id="RHEA:15481"/>
        <dbReference type="ChEBI" id="CHEBI:15377"/>
        <dbReference type="ChEBI" id="CHEBI:15636"/>
        <dbReference type="ChEBI" id="CHEBI:33384"/>
        <dbReference type="ChEBI" id="CHEBI:57305"/>
        <dbReference type="ChEBI" id="CHEBI:57453"/>
        <dbReference type="EC" id="2.1.2.1"/>
    </reaction>
</comment>
<comment type="cofactor">
    <cofactor evidence="1">
        <name>pyridoxal 5'-phosphate</name>
        <dbReference type="ChEBI" id="CHEBI:597326"/>
    </cofactor>
</comment>
<comment type="pathway">
    <text evidence="1">One-carbon metabolism; tetrahydrofolate interconversion.</text>
</comment>
<comment type="pathway">
    <text evidence="1">Amino-acid biosynthesis; glycine biosynthesis; glycine from L-serine: step 1/1.</text>
</comment>
<comment type="subunit">
    <text evidence="1">Homodimer.</text>
</comment>
<comment type="subcellular location">
    <subcellularLocation>
        <location evidence="1">Cytoplasm</location>
    </subcellularLocation>
</comment>
<comment type="similarity">
    <text evidence="1">Belongs to the SHMT family.</text>
</comment>
<name>GLYA1_PSEAE</name>
<accession>Q9HTE9</accession>
<protein>
    <recommendedName>
        <fullName evidence="1">Serine hydroxymethyltransferase 1</fullName>
        <shortName evidence="1">SHMT 1</shortName>
        <shortName evidence="1">Serine methylase 1</shortName>
        <ecNumber evidence="1">2.1.2.1</ecNumber>
    </recommendedName>
</protein>